<evidence type="ECO:0000305" key="1"/>
<evidence type="ECO:0007829" key="2">
    <source>
        <dbReference type="PDB" id="1B35"/>
    </source>
</evidence>
<reference key="1">
    <citation type="journal article" date="2000" name="Mol. Cell. Biol.">
        <title>Naturally occurring dicistronic cricket paralysis virus RNA is regulated by two internal ribosome entry sites.</title>
        <authorList>
            <person name="Wilson J.E."/>
            <person name="Powell M.J."/>
            <person name="Hoover S.E."/>
            <person name="Sarnow P."/>
        </authorList>
    </citation>
    <scope>NUCLEOTIDE SEQUENCE [GENOMIC RNA]</scope>
</reference>
<reference key="2">
    <citation type="journal article" date="1987" name="Virus Res.">
        <title>Cloning of the genome of cricket paralysis virus: sequence of the 3' end.</title>
        <authorList>
            <person name="King L.A."/>
            <person name="Pullin J.S.K."/>
            <person name="Stanway G."/>
            <person name="Almond J.W."/>
            <person name="Moore N.F."/>
        </authorList>
    </citation>
    <scope>NUCLEOTIDE SEQUENCE [GENOMIC RNA] OF 444-895</scope>
</reference>
<reference key="3">
    <citation type="journal article" date="2005" name="C. R. Biol.">
        <title>Translation initiation by factor-independent binding of eukaryotic ribosomes to internal ribosomal entry sites.</title>
        <authorList>
            <person name="Pisarev A.V."/>
            <person name="Shirokikh N.E."/>
            <person name="Hellen C.U."/>
        </authorList>
    </citation>
    <scope>NON-METHIONINE TRANSLATION INITIATION</scope>
</reference>
<reference key="4">
    <citation type="journal article" date="2009" name="RNA">
        <title>Translation initiation factors are not required for Dicistroviridae IRES function in vivo.</title>
        <authorList>
            <person name="Deniz N."/>
            <person name="Lenarcic E.M."/>
            <person name="Landry D.M."/>
            <person name="Thompson S.R."/>
        </authorList>
    </citation>
    <scope>NON-METHIONINE TRANSLATION INITIATION</scope>
</reference>
<reference key="5">
    <citation type="journal article" date="1999" name="Nat. Struct. Biol.">
        <title>The crystal structure of cricket paralysis virus: the first view of a new virus family.</title>
        <authorList>
            <person name="Tate J."/>
            <person name="Liljas L."/>
            <person name="Scotti P."/>
            <person name="Christian P."/>
            <person name="Lin T."/>
            <person name="Johnson J.E."/>
        </authorList>
    </citation>
    <scope>X-RAY CRYSTALLOGRAPHY (2.4 ANGSTROMS) OF 8-895</scope>
    <scope>POLYPROTEIN PROTEOLYTIC CLEAVAGES</scope>
</reference>
<keyword id="KW-0002">3D-structure</keyword>
<keyword id="KW-0167">Capsid protein</keyword>
<keyword id="KW-1035">Host cytoplasm</keyword>
<keyword id="KW-1185">Reference proteome</keyword>
<keyword id="KW-0946">Virion</keyword>
<organism>
    <name type="scientific">Cricket paralysis virus (isolate Teleogryllus commodus/Australia/CrPVVIC/1968)</name>
    <name type="common">CrPV</name>
    <dbReference type="NCBI Taxonomy" id="928300"/>
    <lineage>
        <taxon>Viruses</taxon>
        <taxon>Riboviria</taxon>
        <taxon>Orthornavirae</taxon>
        <taxon>Pisuviricota</taxon>
        <taxon>Pisoniviricetes</taxon>
        <taxon>Picornavirales</taxon>
        <taxon>Dicistroviridae</taxon>
        <taxon>Cripavirus</taxon>
        <taxon>Cripavirus grylli</taxon>
    </lineage>
</organism>
<sequence length="895" mass="100298">ATFQDKQENSHIENEDKRLMSEQKEIVHFVSEGITPSTTALPDIVNLSTNYLDMTTREDRIHSIKDFLSGPIIIATNLWSSSDPVEKQLYTANFPEVLISNAMYQDKLKGFVGLRATLVVKVQVNSQPFQQGRLMLQYIPYAQYMPNRVTLINETLQGRSGCPTTDLELSVGTEVEMRIPYVSPHLYYNLITGQGSFGSIYVVVYSQLHDQVSGTGSIEYTVWAHLEDVDVQYPTGANIFTGNSPNYLSIAERIATGDFTETEMRKLWIHKTYLKRPARIYAQAAKELKQLETNNSPSTALGQISEGLTTLSHIPVLGNIFSTPAWISAKAADLAKLFGFSKPTVQGKIGECKLRGQGRMANFDGMDMSHKMALSSTNEIETKEGLAGTSLDEMDLSRVLSIPNYWDRFTWKTSDVTNTVLWDNYVSPFKVKPYSATITDRFRCTHMGYVANAFTYWRGSIVYTFKFVKTQYHSGRLRISFIPYYYNTTISTGTPDVSRTQKIVVDLRTSTEVSFTVPYIASRPWLYCIRPESSWLSKDNKDGALMYNCVSGIVRVEVLNQLVAAQNVFSEIDVICEVSGGPDLEFAGPTCPSYVPYAGDLTLADTRKIEAERTQEYSNNEDNRITTQCSRIVAQVMGEDQQIPRNEAQHGVHPISIDTHRISNNWSPQAMCIGEKIVSIRQLIKRFGIFGDANTLQADGSSFVVAPFTVTSPTKTLTSTRNYTQFDYYYYLYAFWRGSMRIKMVAETQDGTGTPRKKTNFTWFVRMFNSLQDSFNSLISTSSSAVTTTVLPSGTINMGPSTQVIDPTVEGLIEVEVPYYNISHITPAVTIDDGTPSMEDYLKGHSPPCLLTFSPRDSISATNHHITASFMRAPGDDFSFMYLLEVPPLVNVARA</sequence>
<proteinExistence type="evidence at protein level"/>
<comment type="function">
    <molecule>Structural polyprotein</molecule>
    <text>Precursor of all the viral capsid proteins.</text>
</comment>
<comment type="function">
    <text>Capsid protein 1, together with capsid proteins 2 and 3, form an icosahedral capsid protecting the viral RNA genome. The icosahedral capsid has a pseudo-T=3 symmetry with a diameter of approximately 300 Angstroms, and is composed of 60 copies of each CP1, CP2, and CP3. CP1 is situated at the 12 fivefold axes, whereas CP2 and CP3 are located at the quasi-sixfold axes. All these proteins contain a beta-sheet structure called beta-barrel jelly roll.</text>
</comment>
<comment type="function">
    <text>Capsid protein 4 is a tstructural component of the icosahedral capsid protecting the genomic RNA. It may play an important role in capsid assembly.</text>
</comment>
<comment type="function">
    <text>Capsid protein 2, together with capsid proteins 1 and 3, form an icosahedral capsid protecting the viral RNA genome. The icosahedral capsid has a pseudo-T=3 symmetry with a diameter of approximately 300 Angstroms, and is composed of 60 copies of each CP1, CP2, and CP3. CP1 is situated at the 12 fivefold axes, whereas CP2 and CP3 are located at the quasi-sixfold axes. All these proteins contain a beta-sheet structure called beta-barrel jelly roll.</text>
</comment>
<comment type="function">
    <text>Capsid protein 3, together with capsid proteins 1 and 2, form an icosahedral capsid protecting the viral RNA genome. The icosahedral capsid has a pseudo-T=3 symmetry with a diameter of approximately 300 Angstroms, and is composed of 60 copies of each CP1, CP2, and CP3. CP1 is situated at the 12 fivefold axes, whereas CP2 and CP3 are located at the quasi-sixfold axes. All these proteins contain a beta-sheet structure called beta-barrel jelly roll.</text>
</comment>
<comment type="subcellular location">
    <molecule>Capsid protein 1</molecule>
    <subcellularLocation>
        <location>Virion</location>
    </subcellularLocation>
    <subcellularLocation>
        <location evidence="1">Host cytoplasm</location>
    </subcellularLocation>
</comment>
<comment type="subcellular location">
    <molecule>Capsid protein 4</molecule>
    <subcellularLocation>
        <location>Virion</location>
    </subcellularLocation>
    <subcellularLocation>
        <location evidence="1">Host cytoplasm</location>
    </subcellularLocation>
</comment>
<comment type="subcellular location">
    <molecule>Capsid protein 2</molecule>
    <subcellularLocation>
        <location>Virion</location>
    </subcellularLocation>
    <subcellularLocation>
        <location evidence="1">Host cytoplasm</location>
    </subcellularLocation>
</comment>
<comment type="subcellular location">
    <molecule>Capsid protein 3</molecule>
    <subcellularLocation>
        <location>Virion</location>
    </subcellularLocation>
    <subcellularLocation>
        <location evidence="1">Host cytoplasm</location>
    </subcellularLocation>
</comment>
<comment type="PTM">
    <text>Specific enzymatic cleavages in vivo yield mature proteins.</text>
</comment>
<comment type="similarity">
    <text evidence="1">Belongs to the picornaviruses polyprotein family.</text>
</comment>
<comment type="caution">
    <text evidence="1">Translation initiates on an Ala codon through an unusual Internal Ribosome Entry Site (IRES).</text>
</comment>
<comment type="online information" name="Virus Particle ExploreR db">
    <link uri="https://viperdb.org/Info_Page.php?VDB=1b35"/>
    <text>Icosahedral capsid structure</text>
</comment>
<feature type="chain" id="PRO_0000123825" description="Structural polyprotein">
    <location>
        <begin position="1"/>
        <end position="895"/>
    </location>
</feature>
<feature type="chain" id="PRO_0000398368" description="Capsid protein 1">
    <location>
        <begin position="1"/>
        <end position="283"/>
    </location>
</feature>
<feature type="chain" id="PRO_0000398369" description="Capsid protein 4">
    <location>
        <begin position="284"/>
        <end position="340"/>
    </location>
</feature>
<feature type="chain" id="PRO_0000398370" description="Capsid protein 2">
    <location>
        <begin position="341"/>
        <end position="635"/>
    </location>
</feature>
<feature type="chain" id="PRO_0000398371" description="Capsid protein 3">
    <location>
        <begin position="636"/>
        <end position="895"/>
    </location>
</feature>
<feature type="site" description="Cleavage">
    <location>
        <begin position="283"/>
        <end position="284"/>
    </location>
</feature>
<feature type="site" description="Cleavage">
    <location>
        <begin position="340"/>
        <end position="341"/>
    </location>
</feature>
<feature type="site" description="Cleavage">
    <location>
        <begin position="635"/>
        <end position="636"/>
    </location>
</feature>
<feature type="sequence conflict" description="In Ref. 2; AAA42889." evidence="1" ref="2">
    <original>THM</original>
    <variation>HTH</variation>
    <location>
        <begin position="445"/>
        <end position="447"/>
    </location>
</feature>
<feature type="sequence conflict" description="In Ref. 2; AAA42889." evidence="1" ref="2">
    <original>A</original>
    <variation>T</variation>
    <location>
        <position position="451"/>
    </location>
</feature>
<feature type="sequence conflict" description="In Ref. 2; AAA42889." evidence="1" ref="2">
    <original>V</original>
    <variation>T</variation>
    <location>
        <position position="556"/>
    </location>
</feature>
<feature type="sequence conflict" description="In Ref. 2; AAA42889." evidence="1" ref="2">
    <original>S</original>
    <variation>N</variation>
    <location>
        <position position="579"/>
    </location>
</feature>
<feature type="sequence conflict" description="In Ref. 2; AAA42889." evidence="1" ref="2">
    <original>YV</original>
    <variation>MY</variation>
    <location>
        <begin position="594"/>
        <end position="595"/>
    </location>
</feature>
<feature type="sequence conflict" description="In Ref. 2; AAA42889." evidence="1" ref="2">
    <original>L</original>
    <variation>D</variation>
    <location>
        <position position="601"/>
    </location>
</feature>
<feature type="sequence conflict" description="In Ref. 2; AAA42889." evidence="1" ref="2">
    <original>QQ</original>
    <variation>HE</variation>
    <location>
        <begin position="641"/>
        <end position="642"/>
    </location>
</feature>
<feature type="sequence conflict" description="In Ref. 2; AAA42889." evidence="1" ref="2">
    <original>A</original>
    <variation>G</variation>
    <location>
        <position position="648"/>
    </location>
</feature>
<feature type="sequence conflict" description="In Ref. 2; AAA42889." evidence="1" ref="2">
    <original>VSIRQL</original>
    <variation>IDSTT</variation>
    <location>
        <begin position="678"/>
        <end position="683"/>
    </location>
</feature>
<feature type="sequence conflict" description="In Ref. 2; AAA42889." evidence="1" ref="2">
    <original>A</original>
    <variation>V</variation>
    <location>
        <position position="746"/>
    </location>
</feature>
<feature type="sequence conflict" description="In Ref. 2; AAA42889." evidence="1" ref="2">
    <original>SP</original>
    <variation>A</variation>
    <location>
        <begin position="854"/>
        <end position="855"/>
    </location>
</feature>
<feature type="sequence conflict" description="In Ref. 2; AAA42889." evidence="1" ref="2">
    <original>ATNHHITASFMRAPGDDFSFMYLLEVPPLVNVARA</original>
    <variation>TTHTRSYACAW</variation>
    <location>
        <begin position="861"/>
        <end position="895"/>
    </location>
</feature>
<feature type="helix" evidence="2">
    <location>
        <begin position="15"/>
        <end position="17"/>
    </location>
</feature>
<feature type="strand" evidence="2">
    <location>
        <begin position="19"/>
        <end position="24"/>
    </location>
</feature>
<feature type="strand" evidence="2">
    <location>
        <begin position="27"/>
        <end position="33"/>
    </location>
</feature>
<feature type="strand" evidence="2">
    <location>
        <begin position="40"/>
        <end position="42"/>
    </location>
</feature>
<feature type="helix" evidence="2">
    <location>
        <begin position="49"/>
        <end position="52"/>
    </location>
</feature>
<feature type="turn" evidence="2">
    <location>
        <begin position="53"/>
        <end position="56"/>
    </location>
</feature>
<feature type="helix" evidence="2">
    <location>
        <begin position="64"/>
        <end position="67"/>
    </location>
</feature>
<feature type="strand" evidence="2">
    <location>
        <begin position="72"/>
        <end position="80"/>
    </location>
</feature>
<feature type="strand" evidence="2">
    <location>
        <begin position="88"/>
        <end position="94"/>
    </location>
</feature>
<feature type="helix" evidence="2">
    <location>
        <begin position="96"/>
        <end position="99"/>
    </location>
</feature>
<feature type="helix" evidence="2">
    <location>
        <begin position="102"/>
        <end position="108"/>
    </location>
</feature>
<feature type="strand" evidence="2">
    <location>
        <begin position="111"/>
        <end position="125"/>
    </location>
</feature>
<feature type="strand" evidence="2">
    <location>
        <begin position="131"/>
        <end position="140"/>
    </location>
</feature>
<feature type="helix" evidence="2">
    <location>
        <begin position="142"/>
        <end position="144"/>
    </location>
</feature>
<feature type="helix" evidence="2">
    <location>
        <begin position="146"/>
        <end position="153"/>
    </location>
</feature>
<feature type="helix" evidence="2">
    <location>
        <begin position="156"/>
        <end position="160"/>
    </location>
</feature>
<feature type="strand" evidence="2">
    <location>
        <begin position="162"/>
        <end position="168"/>
    </location>
</feature>
<feature type="turn" evidence="2">
    <location>
        <begin position="169"/>
        <end position="171"/>
    </location>
</feature>
<feature type="strand" evidence="2">
    <location>
        <begin position="174"/>
        <end position="179"/>
    </location>
</feature>
<feature type="strand" evidence="2">
    <location>
        <begin position="184"/>
        <end position="189"/>
    </location>
</feature>
<feature type="turn" evidence="2">
    <location>
        <begin position="190"/>
        <end position="193"/>
    </location>
</feature>
<feature type="strand" evidence="2">
    <location>
        <begin position="198"/>
        <end position="209"/>
    </location>
</feature>
<feature type="turn" evidence="2">
    <location>
        <begin position="211"/>
        <end position="213"/>
    </location>
</feature>
<feature type="strand" evidence="2">
    <location>
        <begin position="217"/>
        <end position="234"/>
    </location>
</feature>
<feature type="helix" evidence="2">
    <location>
        <begin position="285"/>
        <end position="293"/>
    </location>
</feature>
<feature type="helix" evidence="2">
    <location>
        <begin position="305"/>
        <end position="307"/>
    </location>
</feature>
<feature type="strand" evidence="2">
    <location>
        <begin position="320"/>
        <end position="323"/>
    </location>
</feature>
<feature type="helix" evidence="2">
    <location>
        <begin position="331"/>
        <end position="337"/>
    </location>
</feature>
<feature type="strand" evidence="2">
    <location>
        <begin position="356"/>
        <end position="359"/>
    </location>
</feature>
<feature type="strand" evidence="2">
    <location>
        <begin position="363"/>
        <end position="365"/>
    </location>
</feature>
<feature type="turn" evidence="2">
    <location>
        <begin position="384"/>
        <end position="387"/>
    </location>
</feature>
<feature type="helix" evidence="2">
    <location>
        <begin position="396"/>
        <end position="400"/>
    </location>
</feature>
<feature type="strand" evidence="2">
    <location>
        <begin position="404"/>
        <end position="412"/>
    </location>
</feature>
<feature type="strand" evidence="2">
    <location>
        <begin position="420"/>
        <end position="425"/>
    </location>
</feature>
<feature type="strand" evidence="2">
    <location>
        <begin position="431"/>
        <end position="437"/>
    </location>
</feature>
<feature type="strand" evidence="2">
    <location>
        <begin position="440"/>
        <end position="444"/>
    </location>
</feature>
<feature type="helix" evidence="2">
    <location>
        <begin position="446"/>
        <end position="451"/>
    </location>
</feature>
<feature type="strand" evidence="2">
    <location>
        <begin position="455"/>
        <end position="459"/>
    </location>
</feature>
<feature type="strand" evidence="2">
    <location>
        <begin position="461"/>
        <end position="468"/>
    </location>
</feature>
<feature type="strand" evidence="2">
    <location>
        <begin position="473"/>
        <end position="483"/>
    </location>
</feature>
<feature type="turn" evidence="2">
    <location>
        <begin position="488"/>
        <end position="490"/>
    </location>
</feature>
<feature type="strand" evidence="2">
    <location>
        <begin position="491"/>
        <end position="493"/>
    </location>
</feature>
<feature type="helix" evidence="2">
    <location>
        <begin position="497"/>
        <end position="499"/>
    </location>
</feature>
<feature type="strand" evidence="2">
    <location>
        <begin position="500"/>
        <end position="509"/>
    </location>
</feature>
<feature type="strand" evidence="2">
    <location>
        <begin position="512"/>
        <end position="517"/>
    </location>
</feature>
<feature type="strand" evidence="2">
    <location>
        <begin position="522"/>
        <end position="524"/>
    </location>
</feature>
<feature type="helix" evidence="2">
    <location>
        <begin position="534"/>
        <end position="536"/>
    </location>
</feature>
<feature type="turn" evidence="2">
    <location>
        <begin position="542"/>
        <end position="545"/>
    </location>
</feature>
<feature type="helix" evidence="2">
    <location>
        <begin position="546"/>
        <end position="548"/>
    </location>
</feature>
<feature type="strand" evidence="2">
    <location>
        <begin position="552"/>
        <end position="564"/>
    </location>
</feature>
<feature type="strand" evidence="2">
    <location>
        <begin position="570"/>
        <end position="580"/>
    </location>
</feature>
<feature type="strand" evidence="2">
    <location>
        <begin position="593"/>
        <end position="597"/>
    </location>
</feature>
<feature type="helix" evidence="2">
    <location>
        <begin position="603"/>
        <end position="617"/>
    </location>
</feature>
<feature type="strand" evidence="2">
    <location>
        <begin position="637"/>
        <end position="639"/>
    </location>
</feature>
<feature type="helix" evidence="2">
    <location>
        <begin position="645"/>
        <end position="648"/>
    </location>
</feature>
<feature type="turn" evidence="2">
    <location>
        <begin position="649"/>
        <end position="651"/>
    </location>
</feature>
<feature type="helix" evidence="2">
    <location>
        <begin position="667"/>
        <end position="672"/>
    </location>
</feature>
<feature type="helix" evidence="2">
    <location>
        <begin position="680"/>
        <end position="683"/>
    </location>
</feature>
<feature type="strand" evidence="2">
    <location>
        <begin position="688"/>
        <end position="696"/>
    </location>
</feature>
<feature type="strand" evidence="2">
    <location>
        <begin position="702"/>
        <end position="705"/>
    </location>
</feature>
<feature type="strand" evidence="2">
    <location>
        <begin position="716"/>
        <end position="718"/>
    </location>
</feature>
<feature type="helix" evidence="2">
    <location>
        <begin position="725"/>
        <end position="729"/>
    </location>
</feature>
<feature type="helix" evidence="2">
    <location>
        <begin position="730"/>
        <end position="732"/>
    </location>
</feature>
<feature type="strand" evidence="2">
    <location>
        <begin position="733"/>
        <end position="737"/>
    </location>
</feature>
<feature type="strand" evidence="2">
    <location>
        <begin position="740"/>
        <end position="751"/>
    </location>
</feature>
<feature type="strand" evidence="2">
    <location>
        <begin position="756"/>
        <end position="758"/>
    </location>
</feature>
<feature type="strand" evidence="2">
    <location>
        <begin position="763"/>
        <end position="768"/>
    </location>
</feature>
<feature type="strand" evidence="2">
    <location>
        <begin position="770"/>
        <end position="772"/>
    </location>
</feature>
<feature type="helix" evidence="2">
    <location>
        <begin position="773"/>
        <end position="778"/>
    </location>
</feature>
<feature type="strand" evidence="2">
    <location>
        <begin position="785"/>
        <end position="789"/>
    </location>
</feature>
<feature type="strand" evidence="2">
    <location>
        <begin position="793"/>
        <end position="795"/>
    </location>
</feature>
<feature type="strand" evidence="2">
    <location>
        <begin position="801"/>
        <end position="805"/>
    </location>
</feature>
<feature type="helix" evidence="2">
    <location>
        <begin position="807"/>
        <end position="810"/>
    </location>
</feature>
<feature type="strand" evidence="2">
    <location>
        <begin position="811"/>
        <end position="817"/>
    </location>
</feature>
<feature type="strand" evidence="2">
    <location>
        <begin position="822"/>
        <end position="824"/>
    </location>
</feature>
<feature type="strand" evidence="2">
    <location>
        <begin position="831"/>
        <end position="834"/>
    </location>
</feature>
<feature type="helix" evidence="2">
    <location>
        <begin position="838"/>
        <end position="842"/>
    </location>
</feature>
<feature type="strand" evidence="2">
    <location>
        <begin position="850"/>
        <end position="857"/>
    </location>
</feature>
<feature type="turn" evidence="2">
    <location>
        <begin position="861"/>
        <end position="863"/>
    </location>
</feature>
<feature type="strand" evidence="2">
    <location>
        <begin position="864"/>
        <end position="874"/>
    </location>
</feature>
<feature type="strand" evidence="2">
    <location>
        <begin position="879"/>
        <end position="883"/>
    </location>
</feature>
<feature type="strand" evidence="2">
    <location>
        <begin position="889"/>
        <end position="891"/>
    </location>
</feature>
<accession>P13418</accession>
<accession>Q9IJX3</accession>
<organismHost>
    <name type="scientific">Teleogryllus oceanicus</name>
    <name type="common">black field cricket</name>
    <dbReference type="NCBI Taxonomy" id="128161"/>
</organismHost>
<protein>
    <recommendedName>
        <fullName>Structural polyprotein</fullName>
    </recommendedName>
    <component>
        <recommendedName>
            <fullName>Capsid protein 1</fullName>
        </recommendedName>
        <alternativeName>
            <fullName>CP1</fullName>
        </alternativeName>
    </component>
    <component>
        <recommendedName>
            <fullName>Capsid protein 4</fullName>
        </recommendedName>
        <alternativeName>
            <fullName>CP4</fullName>
        </alternativeName>
    </component>
    <component>
        <recommendedName>
            <fullName>Capsid protein 2</fullName>
        </recommendedName>
        <alternativeName>
            <fullName>CP2</fullName>
        </alternativeName>
    </component>
    <component>
        <recommendedName>
            <fullName>Capsid protein 3</fullName>
        </recommendedName>
        <alternativeName>
            <fullName>CP3</fullName>
        </alternativeName>
    </component>
</protein>
<dbReference type="EMBL" id="AF218039">
    <property type="protein sequence ID" value="AAF80999.1"/>
    <property type="molecule type" value="Genomic_RNA"/>
</dbReference>
<dbReference type="EMBL" id="M21938">
    <property type="protein sequence ID" value="AAA42889.1"/>
    <property type="molecule type" value="Genomic_RNA"/>
</dbReference>
<dbReference type="PIR" id="S28374">
    <property type="entry name" value="S28374"/>
</dbReference>
<dbReference type="RefSeq" id="NP_647482.1">
    <property type="nucleotide sequence ID" value="NC_003924.1"/>
</dbReference>
<dbReference type="PDB" id="1B35">
    <property type="method" value="X-ray"/>
    <property type="resolution" value="2.40 A"/>
    <property type="chains" value="A=636-895, B=8-243, C=341-622, D=284-340"/>
</dbReference>
<dbReference type="PDBsum" id="1B35"/>
<dbReference type="SMR" id="P13418"/>
<dbReference type="GeneID" id="944542"/>
<dbReference type="KEGG" id="vg:944542"/>
<dbReference type="EvolutionaryTrace" id="P13418"/>
<dbReference type="Proteomes" id="UP000008590">
    <property type="component" value="Segment"/>
</dbReference>
<dbReference type="GO" id="GO:0030430">
    <property type="term" value="C:host cell cytoplasm"/>
    <property type="evidence" value="ECO:0007669"/>
    <property type="project" value="UniProtKB-SubCell"/>
</dbReference>
<dbReference type="GO" id="GO:0019028">
    <property type="term" value="C:viral capsid"/>
    <property type="evidence" value="ECO:0007669"/>
    <property type="project" value="UniProtKB-KW"/>
</dbReference>
<dbReference type="GO" id="GO:0005198">
    <property type="term" value="F:structural molecule activity"/>
    <property type="evidence" value="ECO:0007669"/>
    <property type="project" value="InterPro"/>
</dbReference>
<dbReference type="CDD" id="cd00205">
    <property type="entry name" value="rhv_like"/>
    <property type="match status" value="2"/>
</dbReference>
<dbReference type="Gene3D" id="2.60.120.20">
    <property type="match status" value="3"/>
</dbReference>
<dbReference type="Gene3D" id="4.10.690.10">
    <property type="entry name" value="Cricket Paralysis Virus, Vp4, Chain D"/>
    <property type="match status" value="1"/>
</dbReference>
<dbReference type="InterPro" id="IPR014872">
    <property type="entry name" value="Dicistrovirus_capsid-polyPr_C"/>
</dbReference>
<dbReference type="InterPro" id="IPR001676">
    <property type="entry name" value="Picornavirus_capsid"/>
</dbReference>
<dbReference type="InterPro" id="IPR033703">
    <property type="entry name" value="Rhv-like"/>
</dbReference>
<dbReference type="InterPro" id="IPR029053">
    <property type="entry name" value="Viral_coat"/>
</dbReference>
<dbReference type="InterPro" id="IPR024343">
    <property type="entry name" value="VP4_dicistrovir"/>
</dbReference>
<dbReference type="Pfam" id="PF08762">
    <property type="entry name" value="CRPV_capsid"/>
    <property type="match status" value="1"/>
</dbReference>
<dbReference type="Pfam" id="PF11492">
    <property type="entry name" value="Dicistro_VP4"/>
    <property type="match status" value="1"/>
</dbReference>
<dbReference type="Pfam" id="PF00073">
    <property type="entry name" value="Rhv"/>
    <property type="match status" value="2"/>
</dbReference>
<dbReference type="SUPFAM" id="SSF88633">
    <property type="entry name" value="Positive stranded ssRNA viruses"/>
    <property type="match status" value="3"/>
</dbReference>
<name>POLS_CRPVC</name>